<comment type="function">
    <text evidence="1">Catalyzes the attachment of glutamate to tRNA(Glu) in a two-step reaction: glutamate is first activated by ATP to form Glu-AMP and then transferred to the acceptor end of tRNA(Glu).</text>
</comment>
<comment type="catalytic activity">
    <reaction evidence="1">
        <text>tRNA(Glu) + L-glutamate + ATP = L-glutamyl-tRNA(Glu) + AMP + diphosphate</text>
        <dbReference type="Rhea" id="RHEA:23540"/>
        <dbReference type="Rhea" id="RHEA-COMP:9663"/>
        <dbReference type="Rhea" id="RHEA-COMP:9680"/>
        <dbReference type="ChEBI" id="CHEBI:29985"/>
        <dbReference type="ChEBI" id="CHEBI:30616"/>
        <dbReference type="ChEBI" id="CHEBI:33019"/>
        <dbReference type="ChEBI" id="CHEBI:78442"/>
        <dbReference type="ChEBI" id="CHEBI:78520"/>
        <dbReference type="ChEBI" id="CHEBI:456215"/>
        <dbReference type="EC" id="6.1.1.17"/>
    </reaction>
</comment>
<comment type="cofactor">
    <cofactor evidence="1">
        <name>Zn(2+)</name>
        <dbReference type="ChEBI" id="CHEBI:29105"/>
    </cofactor>
    <text evidence="1">Binds 1 zinc ion per subunit.</text>
</comment>
<comment type="subunit">
    <text evidence="1">Monomer.</text>
</comment>
<comment type="subcellular location">
    <subcellularLocation>
        <location evidence="1">Cytoplasm</location>
    </subcellularLocation>
</comment>
<comment type="similarity">
    <text evidence="1">Belongs to the class-I aminoacyl-tRNA synthetase family. Glutamate--tRNA ligase type 1 subfamily.</text>
</comment>
<accession>A9QZG6</accession>
<name>SYE_YERPG</name>
<proteinExistence type="inferred from homology"/>
<keyword id="KW-0030">Aminoacyl-tRNA synthetase</keyword>
<keyword id="KW-0067">ATP-binding</keyword>
<keyword id="KW-0963">Cytoplasm</keyword>
<keyword id="KW-0436">Ligase</keyword>
<keyword id="KW-0479">Metal-binding</keyword>
<keyword id="KW-0547">Nucleotide-binding</keyword>
<keyword id="KW-0648">Protein biosynthesis</keyword>
<keyword id="KW-0862">Zinc</keyword>
<protein>
    <recommendedName>
        <fullName evidence="1">Glutamate--tRNA ligase</fullName>
        <ecNumber evidence="1">6.1.1.17</ecNumber>
    </recommendedName>
    <alternativeName>
        <fullName evidence="1">Glutamyl-tRNA synthetase</fullName>
        <shortName evidence="1">GluRS</shortName>
    </alternativeName>
</protein>
<organism>
    <name type="scientific">Yersinia pestis bv. Antiqua (strain Angola)</name>
    <dbReference type="NCBI Taxonomy" id="349746"/>
    <lineage>
        <taxon>Bacteria</taxon>
        <taxon>Pseudomonadati</taxon>
        <taxon>Pseudomonadota</taxon>
        <taxon>Gammaproteobacteria</taxon>
        <taxon>Enterobacterales</taxon>
        <taxon>Yersiniaceae</taxon>
        <taxon>Yersinia</taxon>
    </lineage>
</organism>
<gene>
    <name evidence="1" type="primary">gltX</name>
    <name type="ordered locus">YpAngola_A2739</name>
</gene>
<dbReference type="EC" id="6.1.1.17" evidence="1"/>
<dbReference type="EMBL" id="CP000901">
    <property type="protein sequence ID" value="ABX85236.1"/>
    <property type="molecule type" value="Genomic_DNA"/>
</dbReference>
<dbReference type="RefSeq" id="WP_002222185.1">
    <property type="nucleotide sequence ID" value="NZ_CP009935.1"/>
</dbReference>
<dbReference type="SMR" id="A9QZG6"/>
<dbReference type="GeneID" id="57975716"/>
<dbReference type="KEGG" id="ypg:YpAngola_A2739"/>
<dbReference type="PATRIC" id="fig|349746.12.peg.3769"/>
<dbReference type="GO" id="GO:0005829">
    <property type="term" value="C:cytosol"/>
    <property type="evidence" value="ECO:0007669"/>
    <property type="project" value="TreeGrafter"/>
</dbReference>
<dbReference type="GO" id="GO:0005524">
    <property type="term" value="F:ATP binding"/>
    <property type="evidence" value="ECO:0007669"/>
    <property type="project" value="UniProtKB-UniRule"/>
</dbReference>
<dbReference type="GO" id="GO:0004818">
    <property type="term" value="F:glutamate-tRNA ligase activity"/>
    <property type="evidence" value="ECO:0007669"/>
    <property type="project" value="UniProtKB-UniRule"/>
</dbReference>
<dbReference type="GO" id="GO:0000049">
    <property type="term" value="F:tRNA binding"/>
    <property type="evidence" value="ECO:0007669"/>
    <property type="project" value="InterPro"/>
</dbReference>
<dbReference type="GO" id="GO:0008270">
    <property type="term" value="F:zinc ion binding"/>
    <property type="evidence" value="ECO:0007669"/>
    <property type="project" value="UniProtKB-UniRule"/>
</dbReference>
<dbReference type="GO" id="GO:0006424">
    <property type="term" value="P:glutamyl-tRNA aminoacylation"/>
    <property type="evidence" value="ECO:0007669"/>
    <property type="project" value="UniProtKB-UniRule"/>
</dbReference>
<dbReference type="CDD" id="cd00808">
    <property type="entry name" value="GluRS_core"/>
    <property type="match status" value="1"/>
</dbReference>
<dbReference type="FunFam" id="1.10.10.350:FF:000001">
    <property type="entry name" value="Glutamate--tRNA ligase"/>
    <property type="match status" value="1"/>
</dbReference>
<dbReference type="FunFam" id="3.40.50.620:FF:000007">
    <property type="entry name" value="Glutamate--tRNA ligase"/>
    <property type="match status" value="1"/>
</dbReference>
<dbReference type="Gene3D" id="1.10.10.350">
    <property type="match status" value="1"/>
</dbReference>
<dbReference type="Gene3D" id="3.40.50.620">
    <property type="entry name" value="HUPs"/>
    <property type="match status" value="1"/>
</dbReference>
<dbReference type="HAMAP" id="MF_00022">
    <property type="entry name" value="Glu_tRNA_synth_type1"/>
    <property type="match status" value="1"/>
</dbReference>
<dbReference type="InterPro" id="IPR045462">
    <property type="entry name" value="aa-tRNA-synth_I_cd-bd"/>
</dbReference>
<dbReference type="InterPro" id="IPR020751">
    <property type="entry name" value="aa-tRNA-synth_I_codon-bd_sub2"/>
</dbReference>
<dbReference type="InterPro" id="IPR001412">
    <property type="entry name" value="aa-tRNA-synth_I_CS"/>
</dbReference>
<dbReference type="InterPro" id="IPR008925">
    <property type="entry name" value="aa_tRNA-synth_I_cd-bd_sf"/>
</dbReference>
<dbReference type="InterPro" id="IPR004527">
    <property type="entry name" value="Glu-tRNA-ligase_bac/mito"/>
</dbReference>
<dbReference type="InterPro" id="IPR000924">
    <property type="entry name" value="Glu/Gln-tRNA-synth"/>
</dbReference>
<dbReference type="InterPro" id="IPR020058">
    <property type="entry name" value="Glu/Gln-tRNA-synth_Ib_cat-dom"/>
</dbReference>
<dbReference type="InterPro" id="IPR049940">
    <property type="entry name" value="GluQ/Sye"/>
</dbReference>
<dbReference type="InterPro" id="IPR033910">
    <property type="entry name" value="GluRS_core"/>
</dbReference>
<dbReference type="InterPro" id="IPR014729">
    <property type="entry name" value="Rossmann-like_a/b/a_fold"/>
</dbReference>
<dbReference type="NCBIfam" id="TIGR00464">
    <property type="entry name" value="gltX_bact"/>
    <property type="match status" value="1"/>
</dbReference>
<dbReference type="PANTHER" id="PTHR43311">
    <property type="entry name" value="GLUTAMATE--TRNA LIGASE"/>
    <property type="match status" value="1"/>
</dbReference>
<dbReference type="PANTHER" id="PTHR43311:SF2">
    <property type="entry name" value="GLUTAMATE--TRNA LIGASE, MITOCHONDRIAL-RELATED"/>
    <property type="match status" value="1"/>
</dbReference>
<dbReference type="Pfam" id="PF19269">
    <property type="entry name" value="Anticodon_2"/>
    <property type="match status" value="1"/>
</dbReference>
<dbReference type="Pfam" id="PF00749">
    <property type="entry name" value="tRNA-synt_1c"/>
    <property type="match status" value="1"/>
</dbReference>
<dbReference type="PRINTS" id="PR00987">
    <property type="entry name" value="TRNASYNTHGLU"/>
</dbReference>
<dbReference type="SUPFAM" id="SSF48163">
    <property type="entry name" value="An anticodon-binding domain of class I aminoacyl-tRNA synthetases"/>
    <property type="match status" value="1"/>
</dbReference>
<dbReference type="SUPFAM" id="SSF52374">
    <property type="entry name" value="Nucleotidylyl transferase"/>
    <property type="match status" value="1"/>
</dbReference>
<dbReference type="PROSITE" id="PS00178">
    <property type="entry name" value="AA_TRNA_LIGASE_I"/>
    <property type="match status" value="1"/>
</dbReference>
<feature type="chain" id="PRO_1000090127" description="Glutamate--tRNA ligase">
    <location>
        <begin position="1"/>
        <end position="471"/>
    </location>
</feature>
<feature type="short sequence motif" description="'HIGH' region" evidence="1">
    <location>
        <begin position="9"/>
        <end position="19"/>
    </location>
</feature>
<feature type="short sequence motif" description="'KMSKS' region" evidence="1">
    <location>
        <begin position="237"/>
        <end position="241"/>
    </location>
</feature>
<feature type="binding site" evidence="1">
    <location>
        <position position="98"/>
    </location>
    <ligand>
        <name>Zn(2+)</name>
        <dbReference type="ChEBI" id="CHEBI:29105"/>
    </ligand>
</feature>
<feature type="binding site" evidence="1">
    <location>
        <position position="100"/>
    </location>
    <ligand>
        <name>Zn(2+)</name>
        <dbReference type="ChEBI" id="CHEBI:29105"/>
    </ligand>
</feature>
<feature type="binding site" evidence="1">
    <location>
        <position position="125"/>
    </location>
    <ligand>
        <name>Zn(2+)</name>
        <dbReference type="ChEBI" id="CHEBI:29105"/>
    </ligand>
</feature>
<feature type="binding site" evidence="1">
    <location>
        <position position="127"/>
    </location>
    <ligand>
        <name>Zn(2+)</name>
        <dbReference type="ChEBI" id="CHEBI:29105"/>
    </ligand>
</feature>
<feature type="binding site" evidence="1">
    <location>
        <position position="240"/>
    </location>
    <ligand>
        <name>ATP</name>
        <dbReference type="ChEBI" id="CHEBI:30616"/>
    </ligand>
</feature>
<evidence type="ECO:0000255" key="1">
    <source>
        <dbReference type="HAMAP-Rule" id="MF_00022"/>
    </source>
</evidence>
<sequence>MKIKTRFAPSPTGYLHVGGARTALYSWLFSRHLGGEFVLRIEDTDLGRSTQEAIDAIMDGMNWLNLDWDEGPYFQTKRFDRYNAVIDQMLDAGTAYRCYCSKERLEALREAQMANGEKPRYDGHCRDSQCTHGADEPSVVRFRNPQEGSVIFDDKIRGPIEFSNQELDDLIIRRTDGSPTYNFCVVIDDWDMEITHVIRGEDHINNTPRQINILKALGAPVPEYAHVSMILGDDGKKLSKRHGAVGVMQYRDDGYLPEALLNYLVRLGWSHGDQEIFSIEEMTQLFTLDAVSKSASAFNTEKLQWLNHHYINSLPPEQVAVHLSWHVEQLGIDTRNGPELVEIVKLLGERCKTLKEMAESCRYFYEEFDAFDVDAAKKHLRPIARQPLEAVKVKLAAITEWTTENVHNAIQGTADELGVGMGKVGMPLRVAVTGVGQSPGMDVTVHAIGQARTLARIDKALAFISEREAQQ</sequence>
<reference key="1">
    <citation type="journal article" date="2010" name="J. Bacteriol.">
        <title>Genome sequence of the deep-rooted Yersinia pestis strain Angola reveals new insights into the evolution and pangenome of the plague bacterium.</title>
        <authorList>
            <person name="Eppinger M."/>
            <person name="Worsham P.L."/>
            <person name="Nikolich M.P."/>
            <person name="Riley D.R."/>
            <person name="Sebastian Y."/>
            <person name="Mou S."/>
            <person name="Achtman M."/>
            <person name="Lindler L.E."/>
            <person name="Ravel J."/>
        </authorList>
    </citation>
    <scope>NUCLEOTIDE SEQUENCE [LARGE SCALE GENOMIC DNA]</scope>
    <source>
        <strain>Angola</strain>
    </source>
</reference>